<feature type="chain" id="PRO_1000201990" description="Holliday junction branch migration complex subunit RuvA">
    <location>
        <begin position="1"/>
        <end position="195"/>
    </location>
</feature>
<feature type="region of interest" description="Domain I" evidence="1">
    <location>
        <begin position="1"/>
        <end position="62"/>
    </location>
</feature>
<feature type="region of interest" description="Domain II" evidence="1">
    <location>
        <begin position="63"/>
        <end position="141"/>
    </location>
</feature>
<feature type="region of interest" description="Flexible linker" evidence="1">
    <location>
        <begin position="141"/>
        <end position="145"/>
    </location>
</feature>
<feature type="region of interest" description="Domain III" evidence="1">
    <location>
        <begin position="146"/>
        <end position="195"/>
    </location>
</feature>
<name>RUVA_EXISA</name>
<evidence type="ECO:0000255" key="1">
    <source>
        <dbReference type="HAMAP-Rule" id="MF_00031"/>
    </source>
</evidence>
<accession>C4L522</accession>
<proteinExistence type="inferred from homology"/>
<protein>
    <recommendedName>
        <fullName evidence="1">Holliday junction branch migration complex subunit RuvA</fullName>
    </recommendedName>
</protein>
<reference key="1">
    <citation type="journal article" date="2011" name="J. Bacteriol.">
        <title>Complete genome sequence of the Thermophilic Bacterium Exiguobacterium sp. AT1b.</title>
        <authorList>
            <person name="Vishnivetskaya T.A."/>
            <person name="Lucas S."/>
            <person name="Copeland A."/>
            <person name="Lapidus A."/>
            <person name="Glavina del Rio T."/>
            <person name="Dalin E."/>
            <person name="Tice H."/>
            <person name="Bruce D.C."/>
            <person name="Goodwin L.A."/>
            <person name="Pitluck S."/>
            <person name="Saunders E."/>
            <person name="Brettin T."/>
            <person name="Detter C."/>
            <person name="Han C."/>
            <person name="Larimer F."/>
            <person name="Land M.L."/>
            <person name="Hauser L.J."/>
            <person name="Kyrpides N.C."/>
            <person name="Ovchinnikova G."/>
            <person name="Kathariou S."/>
            <person name="Ramaley R.F."/>
            <person name="Rodrigues D.F."/>
            <person name="Hendrix C."/>
            <person name="Richardson P."/>
            <person name="Tiedje J.M."/>
        </authorList>
    </citation>
    <scope>NUCLEOTIDE SEQUENCE [LARGE SCALE GENOMIC DNA]</scope>
    <source>
        <strain>ATCC BAA-1283 / AT1b</strain>
    </source>
</reference>
<dbReference type="EMBL" id="CP001615">
    <property type="protein sequence ID" value="ACQ71607.1"/>
    <property type="molecule type" value="Genomic_DNA"/>
</dbReference>
<dbReference type="RefSeq" id="WP_015881166.1">
    <property type="nucleotide sequence ID" value="NC_012673.1"/>
</dbReference>
<dbReference type="SMR" id="C4L522"/>
<dbReference type="STRING" id="360911.EAT1b_2691"/>
<dbReference type="KEGG" id="eat:EAT1b_2691"/>
<dbReference type="eggNOG" id="COG0632">
    <property type="taxonomic scope" value="Bacteria"/>
</dbReference>
<dbReference type="HOGENOM" id="CLU_087936_1_0_9"/>
<dbReference type="OrthoDB" id="5293449at2"/>
<dbReference type="Proteomes" id="UP000000716">
    <property type="component" value="Chromosome"/>
</dbReference>
<dbReference type="GO" id="GO:0005737">
    <property type="term" value="C:cytoplasm"/>
    <property type="evidence" value="ECO:0007669"/>
    <property type="project" value="UniProtKB-SubCell"/>
</dbReference>
<dbReference type="GO" id="GO:0009379">
    <property type="term" value="C:Holliday junction helicase complex"/>
    <property type="evidence" value="ECO:0007669"/>
    <property type="project" value="InterPro"/>
</dbReference>
<dbReference type="GO" id="GO:0048476">
    <property type="term" value="C:Holliday junction resolvase complex"/>
    <property type="evidence" value="ECO:0007669"/>
    <property type="project" value="UniProtKB-UniRule"/>
</dbReference>
<dbReference type="GO" id="GO:0005524">
    <property type="term" value="F:ATP binding"/>
    <property type="evidence" value="ECO:0007669"/>
    <property type="project" value="InterPro"/>
</dbReference>
<dbReference type="GO" id="GO:0000400">
    <property type="term" value="F:four-way junction DNA binding"/>
    <property type="evidence" value="ECO:0007669"/>
    <property type="project" value="UniProtKB-UniRule"/>
</dbReference>
<dbReference type="GO" id="GO:0009378">
    <property type="term" value="F:four-way junction helicase activity"/>
    <property type="evidence" value="ECO:0007669"/>
    <property type="project" value="InterPro"/>
</dbReference>
<dbReference type="GO" id="GO:0006310">
    <property type="term" value="P:DNA recombination"/>
    <property type="evidence" value="ECO:0007669"/>
    <property type="project" value="UniProtKB-UniRule"/>
</dbReference>
<dbReference type="GO" id="GO:0006281">
    <property type="term" value="P:DNA repair"/>
    <property type="evidence" value="ECO:0007669"/>
    <property type="project" value="UniProtKB-UniRule"/>
</dbReference>
<dbReference type="CDD" id="cd14332">
    <property type="entry name" value="UBA_RuvA_C"/>
    <property type="match status" value="1"/>
</dbReference>
<dbReference type="Gene3D" id="1.10.150.20">
    <property type="entry name" value="5' to 3' exonuclease, C-terminal subdomain"/>
    <property type="match status" value="1"/>
</dbReference>
<dbReference type="Gene3D" id="1.10.8.10">
    <property type="entry name" value="DNA helicase RuvA subunit, C-terminal domain"/>
    <property type="match status" value="1"/>
</dbReference>
<dbReference type="Gene3D" id="2.40.50.140">
    <property type="entry name" value="Nucleic acid-binding proteins"/>
    <property type="match status" value="1"/>
</dbReference>
<dbReference type="HAMAP" id="MF_00031">
    <property type="entry name" value="DNA_HJ_migration_RuvA"/>
    <property type="match status" value="1"/>
</dbReference>
<dbReference type="InterPro" id="IPR013849">
    <property type="entry name" value="DNA_helicase_Holl-junc_RuvA_I"/>
</dbReference>
<dbReference type="InterPro" id="IPR003583">
    <property type="entry name" value="Hlx-hairpin-Hlx_DNA-bd_motif"/>
</dbReference>
<dbReference type="InterPro" id="IPR012340">
    <property type="entry name" value="NA-bd_OB-fold"/>
</dbReference>
<dbReference type="InterPro" id="IPR000085">
    <property type="entry name" value="RuvA"/>
</dbReference>
<dbReference type="InterPro" id="IPR010994">
    <property type="entry name" value="RuvA_2-like"/>
</dbReference>
<dbReference type="InterPro" id="IPR011114">
    <property type="entry name" value="RuvA_C"/>
</dbReference>
<dbReference type="InterPro" id="IPR036267">
    <property type="entry name" value="RuvA_C_sf"/>
</dbReference>
<dbReference type="NCBIfam" id="TIGR00084">
    <property type="entry name" value="ruvA"/>
    <property type="match status" value="1"/>
</dbReference>
<dbReference type="Pfam" id="PF14520">
    <property type="entry name" value="HHH_5"/>
    <property type="match status" value="1"/>
</dbReference>
<dbReference type="Pfam" id="PF07499">
    <property type="entry name" value="RuvA_C"/>
    <property type="match status" value="1"/>
</dbReference>
<dbReference type="Pfam" id="PF01330">
    <property type="entry name" value="RuvA_N"/>
    <property type="match status" value="1"/>
</dbReference>
<dbReference type="SMART" id="SM00278">
    <property type="entry name" value="HhH1"/>
    <property type="match status" value="2"/>
</dbReference>
<dbReference type="SUPFAM" id="SSF46929">
    <property type="entry name" value="DNA helicase RuvA subunit, C-terminal domain"/>
    <property type="match status" value="1"/>
</dbReference>
<dbReference type="SUPFAM" id="SSF50249">
    <property type="entry name" value="Nucleic acid-binding proteins"/>
    <property type="match status" value="1"/>
</dbReference>
<dbReference type="SUPFAM" id="SSF47781">
    <property type="entry name" value="RuvA domain 2-like"/>
    <property type="match status" value="1"/>
</dbReference>
<organism>
    <name type="scientific">Exiguobacterium sp. (strain ATCC BAA-1283 / AT1b)</name>
    <dbReference type="NCBI Taxonomy" id="360911"/>
    <lineage>
        <taxon>Bacteria</taxon>
        <taxon>Bacillati</taxon>
        <taxon>Bacillota</taxon>
        <taxon>Bacilli</taxon>
        <taxon>Bacillales</taxon>
        <taxon>Bacillales Family XII. Incertae Sedis</taxon>
        <taxon>Exiguobacterium</taxon>
    </lineage>
</organism>
<sequence>MIEFVKGPVAYVCAEYITLDVSGVGYKVHVPNPFFYREQDEHVIVFTHHYVREDQQTLYGFRSRRERELFNKLLSVSGIGPKGALAIVASGDIDALIDAIETENEKYLTKFPGVGKKTAKQMALDLKGKLSELAPDYVPNEGLFAQGASELDEACEALVALGYSEREIAKVRKALSGEILTTDAYIKRALQLLLK</sequence>
<gene>
    <name evidence="1" type="primary">ruvA</name>
    <name type="ordered locus">EAT1b_2691</name>
</gene>
<comment type="function">
    <text evidence="1">The RuvA-RuvB-RuvC complex processes Holliday junction (HJ) DNA during genetic recombination and DNA repair, while the RuvA-RuvB complex plays an important role in the rescue of blocked DNA replication forks via replication fork reversal (RFR). RuvA specifically binds to HJ cruciform DNA, conferring on it an open structure. The RuvB hexamer acts as an ATP-dependent pump, pulling dsDNA into and through the RuvAB complex. HJ branch migration allows RuvC to scan DNA until it finds its consensus sequence, where it cleaves and resolves the cruciform DNA.</text>
</comment>
<comment type="subunit">
    <text evidence="1">Homotetramer. Forms an RuvA(8)-RuvB(12)-Holliday junction (HJ) complex. HJ DNA is sandwiched between 2 RuvA tetramers; dsDNA enters through RuvA and exits via RuvB. An RuvB hexamer assembles on each DNA strand where it exits the tetramer. Each RuvB hexamer is contacted by two RuvA subunits (via domain III) on 2 adjacent RuvB subunits; this complex drives branch migration. In the full resolvosome a probable DNA-RuvA(4)-RuvB(12)-RuvC(2) complex forms which resolves the HJ.</text>
</comment>
<comment type="subcellular location">
    <subcellularLocation>
        <location evidence="1">Cytoplasm</location>
    </subcellularLocation>
</comment>
<comment type="domain">
    <text evidence="1">Has three domains with a flexible linker between the domains II and III and assumes an 'L' shape. Domain III is highly mobile and contacts RuvB.</text>
</comment>
<comment type="similarity">
    <text evidence="1">Belongs to the RuvA family.</text>
</comment>
<keyword id="KW-0963">Cytoplasm</keyword>
<keyword id="KW-0227">DNA damage</keyword>
<keyword id="KW-0233">DNA recombination</keyword>
<keyword id="KW-0234">DNA repair</keyword>
<keyword id="KW-0238">DNA-binding</keyword>